<proteinExistence type="inferred from homology"/>
<comment type="function">
    <text evidence="1">Involved in urease metallocenter assembly. Binds nickel. Probably functions as a nickel donor during metallocenter assembly.</text>
</comment>
<comment type="subcellular location">
    <subcellularLocation>
        <location evidence="1">Cytoplasm</location>
    </subcellularLocation>
</comment>
<comment type="similarity">
    <text evidence="1">Belongs to the UreE family.</text>
</comment>
<sequence length="214" mass="23560">MRHVDGVVGNRYDDPDLDEQLHAHEDAGRLERVVLEAGQRKRSRLRVETDAGTDLGIVVDQPELRAGDVLFLDDDAAAVVEFESRTAFVVDLPSPGPETVAAAVELGHRVGNQHWDIAIEGGTVYVPVEADRRIIEDVLGEHIPDSGTTRYASVDASLFIGENAEPSGVDHSHEATDSGHGYGEDHDHDHSHDHNHDHDHNHDHDHSHSHDSHE</sequence>
<name>UREE_NATPD</name>
<feature type="chain" id="PRO_0000223462" description="Urease accessory protein UreE">
    <location>
        <begin position="1"/>
        <end position="214"/>
    </location>
</feature>
<feature type="region of interest" description="Disordered" evidence="2">
    <location>
        <begin position="163"/>
        <end position="214"/>
    </location>
</feature>
<feature type="compositionally biased region" description="Basic and acidic residues" evidence="2">
    <location>
        <begin position="168"/>
        <end position="214"/>
    </location>
</feature>
<keyword id="KW-0143">Chaperone</keyword>
<keyword id="KW-0963">Cytoplasm</keyword>
<keyword id="KW-0533">Nickel</keyword>
<keyword id="KW-0996">Nickel insertion</keyword>
<keyword id="KW-1185">Reference proteome</keyword>
<organism>
    <name type="scientific">Natronomonas pharaonis (strain ATCC 35678 / DSM 2160 / CIP 103997 / JCM 8858 / NBRC 14720 / NCIMB 2260 / Gabara)</name>
    <name type="common">Halobacterium pharaonis</name>
    <dbReference type="NCBI Taxonomy" id="348780"/>
    <lineage>
        <taxon>Archaea</taxon>
        <taxon>Methanobacteriati</taxon>
        <taxon>Methanobacteriota</taxon>
        <taxon>Stenosarchaea group</taxon>
        <taxon>Halobacteria</taxon>
        <taxon>Halobacteriales</taxon>
        <taxon>Haloarculaceae</taxon>
        <taxon>Natronomonas</taxon>
    </lineage>
</organism>
<evidence type="ECO:0000255" key="1">
    <source>
        <dbReference type="HAMAP-Rule" id="MF_00822"/>
    </source>
</evidence>
<evidence type="ECO:0000256" key="2">
    <source>
        <dbReference type="SAM" id="MobiDB-lite"/>
    </source>
</evidence>
<protein>
    <recommendedName>
        <fullName evidence="1">Urease accessory protein UreE</fullName>
    </recommendedName>
</protein>
<gene>
    <name evidence="1" type="primary">ureE</name>
    <name type="ordered locus">NP_2018A</name>
</gene>
<reference key="1">
    <citation type="journal article" date="2005" name="Genome Res.">
        <title>Living with two extremes: conclusions from the genome sequence of Natronomonas pharaonis.</title>
        <authorList>
            <person name="Falb M."/>
            <person name="Pfeiffer F."/>
            <person name="Palm P."/>
            <person name="Rodewald K."/>
            <person name="Hickmann V."/>
            <person name="Tittor J."/>
            <person name="Oesterhelt D."/>
        </authorList>
    </citation>
    <scope>NUCLEOTIDE SEQUENCE [LARGE SCALE GENOMIC DNA]</scope>
    <source>
        <strain>ATCC 35678 / DSM 2160 / CIP 103997 / JCM 8858 / NBRC 14720 / NCIMB 2260 / Gabara</strain>
    </source>
</reference>
<dbReference type="EMBL" id="CR936257">
    <property type="protein sequence ID" value="CAI49100.1"/>
    <property type="molecule type" value="Genomic_DNA"/>
</dbReference>
<dbReference type="RefSeq" id="WP_011322729.1">
    <property type="nucleotide sequence ID" value="NC_007426.1"/>
</dbReference>
<dbReference type="SMR" id="Q3IRZ1"/>
<dbReference type="STRING" id="348780.NP_2018A"/>
<dbReference type="EnsemblBacteria" id="CAI49100">
    <property type="protein sequence ID" value="CAI49100"/>
    <property type="gene ID" value="NP_2018A"/>
</dbReference>
<dbReference type="GeneID" id="3703452"/>
<dbReference type="KEGG" id="nph:NP_2018A"/>
<dbReference type="eggNOG" id="arCOG06188">
    <property type="taxonomic scope" value="Archaea"/>
</dbReference>
<dbReference type="HOGENOM" id="CLU_095954_0_0_2"/>
<dbReference type="OrthoDB" id="241983at2157"/>
<dbReference type="Proteomes" id="UP000002698">
    <property type="component" value="Chromosome"/>
</dbReference>
<dbReference type="GO" id="GO:0005737">
    <property type="term" value="C:cytoplasm"/>
    <property type="evidence" value="ECO:0007669"/>
    <property type="project" value="UniProtKB-SubCell"/>
</dbReference>
<dbReference type="GO" id="GO:0016151">
    <property type="term" value="F:nickel cation binding"/>
    <property type="evidence" value="ECO:0007669"/>
    <property type="project" value="UniProtKB-UniRule"/>
</dbReference>
<dbReference type="GO" id="GO:0051082">
    <property type="term" value="F:unfolded protein binding"/>
    <property type="evidence" value="ECO:0007669"/>
    <property type="project" value="UniProtKB-UniRule"/>
</dbReference>
<dbReference type="GO" id="GO:0006457">
    <property type="term" value="P:protein folding"/>
    <property type="evidence" value="ECO:0007669"/>
    <property type="project" value="InterPro"/>
</dbReference>
<dbReference type="Gene3D" id="2.60.260.20">
    <property type="entry name" value="Urease metallochaperone UreE, N-terminal domain"/>
    <property type="match status" value="1"/>
</dbReference>
<dbReference type="HAMAP" id="MF_00822">
    <property type="entry name" value="UreE"/>
    <property type="match status" value="1"/>
</dbReference>
<dbReference type="InterPro" id="IPR012406">
    <property type="entry name" value="UreE"/>
</dbReference>
<dbReference type="InterPro" id="IPR004029">
    <property type="entry name" value="UreE_N"/>
</dbReference>
<dbReference type="InterPro" id="IPR036118">
    <property type="entry name" value="UreE_N_sf"/>
</dbReference>
<dbReference type="NCBIfam" id="NF009752">
    <property type="entry name" value="PRK13261.1-2"/>
    <property type="match status" value="1"/>
</dbReference>
<dbReference type="Pfam" id="PF02814">
    <property type="entry name" value="UreE_N"/>
    <property type="match status" value="1"/>
</dbReference>
<dbReference type="SMART" id="SM00988">
    <property type="entry name" value="UreE_N"/>
    <property type="match status" value="1"/>
</dbReference>
<dbReference type="SUPFAM" id="SSF69287">
    <property type="entry name" value="Urease metallochaperone UreE, N-terminal domain"/>
    <property type="match status" value="1"/>
</dbReference>
<accession>Q3IRZ1</accession>